<feature type="chain" id="PRO_1000147779" description="4-deoxy-L-threo-5-hexosulose-uronate ketol-isomerase">
    <location>
        <begin position="1"/>
        <end position="281"/>
    </location>
</feature>
<feature type="binding site" evidence="1">
    <location>
        <position position="198"/>
    </location>
    <ligand>
        <name>Zn(2+)</name>
        <dbReference type="ChEBI" id="CHEBI:29105"/>
    </ligand>
</feature>
<feature type="binding site" evidence="1">
    <location>
        <position position="200"/>
    </location>
    <ligand>
        <name>Zn(2+)</name>
        <dbReference type="ChEBI" id="CHEBI:29105"/>
    </ligand>
</feature>
<feature type="binding site" evidence="1">
    <location>
        <position position="205"/>
    </location>
    <ligand>
        <name>Zn(2+)</name>
        <dbReference type="ChEBI" id="CHEBI:29105"/>
    </ligand>
</feature>
<feature type="binding site" evidence="1">
    <location>
        <position position="248"/>
    </location>
    <ligand>
        <name>Zn(2+)</name>
        <dbReference type="ChEBI" id="CHEBI:29105"/>
    </ligand>
</feature>
<reference key="1">
    <citation type="journal article" date="2006" name="Proc. Natl. Acad. Sci. U.S.A.">
        <title>Comparative genomics of the lactic acid bacteria.</title>
        <authorList>
            <person name="Makarova K.S."/>
            <person name="Slesarev A."/>
            <person name="Wolf Y.I."/>
            <person name="Sorokin A."/>
            <person name="Mirkin B."/>
            <person name="Koonin E.V."/>
            <person name="Pavlov A."/>
            <person name="Pavlova N."/>
            <person name="Karamychev V."/>
            <person name="Polouchine N."/>
            <person name="Shakhova V."/>
            <person name="Grigoriev I."/>
            <person name="Lou Y."/>
            <person name="Rohksar D."/>
            <person name="Lucas S."/>
            <person name="Huang K."/>
            <person name="Goodstein D.M."/>
            <person name="Hawkins T."/>
            <person name="Plengvidhya V."/>
            <person name="Welker D."/>
            <person name="Hughes J."/>
            <person name="Goh Y."/>
            <person name="Benson A."/>
            <person name="Baldwin K."/>
            <person name="Lee J.-H."/>
            <person name="Diaz-Muniz I."/>
            <person name="Dosti B."/>
            <person name="Smeianov V."/>
            <person name="Wechter W."/>
            <person name="Barabote R."/>
            <person name="Lorca G."/>
            <person name="Altermann E."/>
            <person name="Barrangou R."/>
            <person name="Ganesan B."/>
            <person name="Xie Y."/>
            <person name="Rawsthorne H."/>
            <person name="Tamir D."/>
            <person name="Parker C."/>
            <person name="Breidt F."/>
            <person name="Broadbent J.R."/>
            <person name="Hutkins R."/>
            <person name="O'Sullivan D."/>
            <person name="Steele J."/>
            <person name="Unlu G."/>
            <person name="Saier M.H. Jr."/>
            <person name="Klaenhammer T."/>
            <person name="Richardson P."/>
            <person name="Kozyavkin S."/>
            <person name="Weimer B.C."/>
            <person name="Mills D.A."/>
        </authorList>
    </citation>
    <scope>NUCLEOTIDE SEQUENCE [LARGE SCALE GENOMIC DNA]</scope>
    <source>
        <strain>ATCC 367 / BCRC 12310 / CIP 105137 / JCM 1170 / LMG 11437 / NCIMB 947 / NCTC 947</strain>
    </source>
</reference>
<accession>Q03U25</accession>
<sequence>MAFQMVTQYAHSPEDIDHYNTDELRQQFLMAEIFVPGDIRLTYTYNDRMIFGGVTPTTTPLEIKLDQQLGVDYFLQRRELGFINIGGAGTVTIDGTTSDVAPHDGYYISMGTQSVIFASTDAKHPAKFYVVSTPAHRAYPSKQLAFKDTLAMPMGDQAHMNKRTIYKYIDASTMATCQLQMGYTVLAPGNSWNTMPAHTHARRMETYLYTEFGDPNTRVAHFLGTPENTKHIWLEPDQAVVNPSYSIHCGVGTTNYAFIWAMCGENQTYDDMDAVDMHDLR</sequence>
<dbReference type="EC" id="5.3.1.17" evidence="1"/>
<dbReference type="EMBL" id="CP000416">
    <property type="protein sequence ID" value="ABJ63297.1"/>
    <property type="molecule type" value="Genomic_DNA"/>
</dbReference>
<dbReference type="RefSeq" id="WP_011666933.1">
    <property type="nucleotide sequence ID" value="NC_008497.1"/>
</dbReference>
<dbReference type="SMR" id="Q03U25"/>
<dbReference type="STRING" id="387344.LVIS_0127"/>
<dbReference type="KEGG" id="lbr:LVIS_0127"/>
<dbReference type="PATRIC" id="fig|387344.15.peg.125"/>
<dbReference type="eggNOG" id="COG3717">
    <property type="taxonomic scope" value="Bacteria"/>
</dbReference>
<dbReference type="HOGENOM" id="CLU_062609_0_0_9"/>
<dbReference type="UniPathway" id="UPA00545">
    <property type="reaction ID" value="UER00826"/>
</dbReference>
<dbReference type="Proteomes" id="UP000001652">
    <property type="component" value="Chromosome"/>
</dbReference>
<dbReference type="GO" id="GO:0008697">
    <property type="term" value="F:4-deoxy-L-threo-5-hexosulose-uronate ketol-isomerase activity"/>
    <property type="evidence" value="ECO:0007669"/>
    <property type="project" value="UniProtKB-UniRule"/>
</dbReference>
<dbReference type="GO" id="GO:0008270">
    <property type="term" value="F:zinc ion binding"/>
    <property type="evidence" value="ECO:0007669"/>
    <property type="project" value="UniProtKB-UniRule"/>
</dbReference>
<dbReference type="GO" id="GO:0019698">
    <property type="term" value="P:D-galacturonate catabolic process"/>
    <property type="evidence" value="ECO:0007669"/>
    <property type="project" value="TreeGrafter"/>
</dbReference>
<dbReference type="GO" id="GO:0042840">
    <property type="term" value="P:D-glucuronate catabolic process"/>
    <property type="evidence" value="ECO:0007669"/>
    <property type="project" value="TreeGrafter"/>
</dbReference>
<dbReference type="GO" id="GO:0045490">
    <property type="term" value="P:pectin catabolic process"/>
    <property type="evidence" value="ECO:0007669"/>
    <property type="project" value="UniProtKB-UniRule"/>
</dbReference>
<dbReference type="CDD" id="cd20491">
    <property type="entry name" value="cupin_KduI_C"/>
    <property type="match status" value="1"/>
</dbReference>
<dbReference type="CDD" id="cd20294">
    <property type="entry name" value="cupin_KduI_N"/>
    <property type="match status" value="1"/>
</dbReference>
<dbReference type="Gene3D" id="2.60.120.10">
    <property type="entry name" value="Jelly Rolls"/>
    <property type="match status" value="1"/>
</dbReference>
<dbReference type="Gene3D" id="2.60.120.520">
    <property type="entry name" value="pectin degrading enzyme 5-keto 4- deoxyuronate isomerase, domain 1"/>
    <property type="match status" value="1"/>
</dbReference>
<dbReference type="HAMAP" id="MF_00687">
    <property type="entry name" value="KduI"/>
    <property type="match status" value="1"/>
</dbReference>
<dbReference type="InterPro" id="IPR007045">
    <property type="entry name" value="KduI"/>
</dbReference>
<dbReference type="InterPro" id="IPR021120">
    <property type="entry name" value="KduI/IolB_isomerase"/>
</dbReference>
<dbReference type="InterPro" id="IPR027449">
    <property type="entry name" value="KduI_N"/>
</dbReference>
<dbReference type="InterPro" id="IPR014710">
    <property type="entry name" value="RmlC-like_jellyroll"/>
</dbReference>
<dbReference type="InterPro" id="IPR011051">
    <property type="entry name" value="RmlC_Cupin_sf"/>
</dbReference>
<dbReference type="NCBIfam" id="NF002091">
    <property type="entry name" value="PRK00924.1"/>
    <property type="match status" value="1"/>
</dbReference>
<dbReference type="PANTHER" id="PTHR38461">
    <property type="entry name" value="4-DEOXY-L-THREO-5-HEXOSULOSE-URONATE KETOL-ISOMERASE"/>
    <property type="match status" value="1"/>
</dbReference>
<dbReference type="PANTHER" id="PTHR38461:SF1">
    <property type="entry name" value="4-DEOXY-L-THREO-5-HEXOSULOSE-URONATE KETOL-ISOMERASE"/>
    <property type="match status" value="1"/>
</dbReference>
<dbReference type="Pfam" id="PF04962">
    <property type="entry name" value="KduI"/>
    <property type="match status" value="1"/>
</dbReference>
<dbReference type="PIRSF" id="PIRSF006625">
    <property type="entry name" value="KduI"/>
    <property type="match status" value="1"/>
</dbReference>
<dbReference type="SUPFAM" id="SSF51182">
    <property type="entry name" value="RmlC-like cupins"/>
    <property type="match status" value="1"/>
</dbReference>
<evidence type="ECO:0000255" key="1">
    <source>
        <dbReference type="HAMAP-Rule" id="MF_00687"/>
    </source>
</evidence>
<organism>
    <name type="scientific">Levilactobacillus brevis (strain ATCC 367 / BCRC 12310 / CIP 105137 / JCM 1170 / LMG 11437 / NCIMB 947 / NCTC 947)</name>
    <name type="common">Lactobacillus brevis</name>
    <dbReference type="NCBI Taxonomy" id="387344"/>
    <lineage>
        <taxon>Bacteria</taxon>
        <taxon>Bacillati</taxon>
        <taxon>Bacillota</taxon>
        <taxon>Bacilli</taxon>
        <taxon>Lactobacillales</taxon>
        <taxon>Lactobacillaceae</taxon>
        <taxon>Levilactobacillus</taxon>
    </lineage>
</organism>
<gene>
    <name evidence="1" type="primary">kduI</name>
    <name type="ordered locus">LVIS_0127</name>
</gene>
<protein>
    <recommendedName>
        <fullName evidence="1">4-deoxy-L-threo-5-hexosulose-uronate ketol-isomerase</fullName>
        <ecNumber evidence="1">5.3.1.17</ecNumber>
    </recommendedName>
    <alternativeName>
        <fullName evidence="1">5-keto-4-deoxyuronate isomerase</fullName>
    </alternativeName>
    <alternativeName>
        <fullName evidence="1">DKI isomerase</fullName>
    </alternativeName>
</protein>
<proteinExistence type="inferred from homology"/>
<keyword id="KW-0413">Isomerase</keyword>
<keyword id="KW-0479">Metal-binding</keyword>
<keyword id="KW-1185">Reference proteome</keyword>
<keyword id="KW-0862">Zinc</keyword>
<comment type="function">
    <text evidence="1">Catalyzes the isomerization of 5-dehydro-4-deoxy-D-glucuronate to 3-deoxy-D-glycero-2,5-hexodiulosonate.</text>
</comment>
<comment type="catalytic activity">
    <reaction evidence="1">
        <text>5-dehydro-4-deoxy-D-glucuronate = 3-deoxy-D-glycero-2,5-hexodiulosonate</text>
        <dbReference type="Rhea" id="RHEA:23896"/>
        <dbReference type="ChEBI" id="CHEBI:17117"/>
        <dbReference type="ChEBI" id="CHEBI:29071"/>
        <dbReference type="EC" id="5.3.1.17"/>
    </reaction>
</comment>
<comment type="cofactor">
    <cofactor evidence="1">
        <name>Zn(2+)</name>
        <dbReference type="ChEBI" id="CHEBI:29105"/>
    </cofactor>
    <text evidence="1">Binds 1 zinc ion per subunit.</text>
</comment>
<comment type="pathway">
    <text evidence="1">Glycan metabolism; pectin degradation; 2-dehydro-3-deoxy-D-gluconate from pectin: step 4/5.</text>
</comment>
<comment type="similarity">
    <text evidence="1">Belongs to the KduI family.</text>
</comment>
<name>KDUI_LEVBA</name>